<dbReference type="EMBL" id="BA000022">
    <property type="protein sequence ID" value="BAA17034.1"/>
    <property type="molecule type" value="Genomic_DNA"/>
</dbReference>
<dbReference type="PIR" id="S74994">
    <property type="entry name" value="S74994"/>
</dbReference>
<dbReference type="SMR" id="P73014"/>
<dbReference type="IntAct" id="P73014">
    <property type="interactions" value="2"/>
</dbReference>
<dbReference type="STRING" id="1148.gene:10497895"/>
<dbReference type="PaxDb" id="1148-1652109"/>
<dbReference type="EnsemblBacteria" id="BAA17034">
    <property type="protein sequence ID" value="BAA17034"/>
    <property type="gene ID" value="BAA17034"/>
</dbReference>
<dbReference type="KEGG" id="syn:ssr1736"/>
<dbReference type="eggNOG" id="COG0333">
    <property type="taxonomic scope" value="Bacteria"/>
</dbReference>
<dbReference type="InParanoid" id="P73014"/>
<dbReference type="Proteomes" id="UP000001425">
    <property type="component" value="Chromosome"/>
</dbReference>
<dbReference type="GO" id="GO:0015934">
    <property type="term" value="C:large ribosomal subunit"/>
    <property type="evidence" value="ECO:0007669"/>
    <property type="project" value="InterPro"/>
</dbReference>
<dbReference type="GO" id="GO:0003735">
    <property type="term" value="F:structural constituent of ribosome"/>
    <property type="evidence" value="ECO:0007669"/>
    <property type="project" value="InterPro"/>
</dbReference>
<dbReference type="GO" id="GO:0006412">
    <property type="term" value="P:translation"/>
    <property type="evidence" value="ECO:0007669"/>
    <property type="project" value="UniProtKB-UniRule"/>
</dbReference>
<dbReference type="Gene3D" id="1.20.5.640">
    <property type="entry name" value="Single helix bin"/>
    <property type="match status" value="1"/>
</dbReference>
<dbReference type="HAMAP" id="MF_00340">
    <property type="entry name" value="Ribosomal_bL32"/>
    <property type="match status" value="1"/>
</dbReference>
<dbReference type="InterPro" id="IPR002677">
    <property type="entry name" value="Ribosomal_bL32"/>
</dbReference>
<dbReference type="InterPro" id="IPR044958">
    <property type="entry name" value="Ribosomal_bL32_plant/cyanobact"/>
</dbReference>
<dbReference type="InterPro" id="IPR011332">
    <property type="entry name" value="Ribosomal_zn-bd"/>
</dbReference>
<dbReference type="NCBIfam" id="TIGR01031">
    <property type="entry name" value="rpmF_bact"/>
    <property type="match status" value="1"/>
</dbReference>
<dbReference type="PANTHER" id="PTHR36083">
    <property type="entry name" value="50S RIBOSOMAL PROTEIN L32, CHLOROPLASTIC"/>
    <property type="match status" value="1"/>
</dbReference>
<dbReference type="PANTHER" id="PTHR36083:SF1">
    <property type="entry name" value="LARGE RIBOSOMAL SUBUNIT PROTEIN BL32C"/>
    <property type="match status" value="1"/>
</dbReference>
<dbReference type="Pfam" id="PF01783">
    <property type="entry name" value="Ribosomal_L32p"/>
    <property type="match status" value="1"/>
</dbReference>
<dbReference type="SUPFAM" id="SSF57829">
    <property type="entry name" value="Zn-binding ribosomal proteins"/>
    <property type="match status" value="1"/>
</dbReference>
<keyword id="KW-1185">Reference proteome</keyword>
<keyword id="KW-0687">Ribonucleoprotein</keyword>
<keyword id="KW-0689">Ribosomal protein</keyword>
<accession>P73014</accession>
<gene>
    <name type="primary">rpmF</name>
    <name type="synonym">rpl32</name>
    <name type="ordered locus">ssr1736</name>
</gene>
<feature type="initiator methionine" description="Removed" evidence="1">
    <location>
        <position position="1"/>
    </location>
</feature>
<feature type="chain" id="PRO_0000172424" description="Large ribosomal subunit protein bL32">
    <location>
        <begin position="2"/>
        <end position="57"/>
    </location>
</feature>
<feature type="region of interest" description="Disordered" evidence="2">
    <location>
        <begin position="1"/>
        <end position="35"/>
    </location>
</feature>
<feature type="compositionally biased region" description="Basic residues" evidence="2">
    <location>
        <begin position="1"/>
        <end position="22"/>
    </location>
</feature>
<organism>
    <name type="scientific">Synechocystis sp. (strain ATCC 27184 / PCC 6803 / Kazusa)</name>
    <dbReference type="NCBI Taxonomy" id="1111708"/>
    <lineage>
        <taxon>Bacteria</taxon>
        <taxon>Bacillati</taxon>
        <taxon>Cyanobacteriota</taxon>
        <taxon>Cyanophyceae</taxon>
        <taxon>Synechococcales</taxon>
        <taxon>Merismopediaceae</taxon>
        <taxon>Synechocystis</taxon>
    </lineage>
</organism>
<protein>
    <recommendedName>
        <fullName evidence="3">Large ribosomal subunit protein bL32</fullName>
    </recommendedName>
    <alternativeName>
        <fullName>50S ribosomal protein L32</fullName>
    </alternativeName>
</protein>
<sequence length="57" mass="6456">MAVPKKKTSKAKRDQRRAHWRRQASSQAQKALSLGKSILSGRSTFLYPPAEEEGEEE</sequence>
<evidence type="ECO:0000250" key="1"/>
<evidence type="ECO:0000256" key="2">
    <source>
        <dbReference type="SAM" id="MobiDB-lite"/>
    </source>
</evidence>
<evidence type="ECO:0000305" key="3"/>
<proteinExistence type="inferred from homology"/>
<name>RL32_SYNY3</name>
<comment type="similarity">
    <text evidence="3">Belongs to the bacterial ribosomal protein bL32 family.</text>
</comment>
<reference key="1">
    <citation type="journal article" date="1996" name="DNA Res.">
        <title>Sequence analysis of the genome of the unicellular cyanobacterium Synechocystis sp. strain PCC6803. II. Sequence determination of the entire genome and assignment of potential protein-coding regions.</title>
        <authorList>
            <person name="Kaneko T."/>
            <person name="Sato S."/>
            <person name="Kotani H."/>
            <person name="Tanaka A."/>
            <person name="Asamizu E."/>
            <person name="Nakamura Y."/>
            <person name="Miyajima N."/>
            <person name="Hirosawa M."/>
            <person name="Sugiura M."/>
            <person name="Sasamoto S."/>
            <person name="Kimura T."/>
            <person name="Hosouchi T."/>
            <person name="Matsuno A."/>
            <person name="Muraki A."/>
            <person name="Nakazaki N."/>
            <person name="Naruo K."/>
            <person name="Okumura S."/>
            <person name="Shimpo S."/>
            <person name="Takeuchi C."/>
            <person name="Wada T."/>
            <person name="Watanabe A."/>
            <person name="Yamada M."/>
            <person name="Yasuda M."/>
            <person name="Tabata S."/>
        </authorList>
    </citation>
    <scope>NUCLEOTIDE SEQUENCE [LARGE SCALE GENOMIC DNA]</scope>
    <source>
        <strain>ATCC 27184 / PCC 6803 / Kazusa</strain>
    </source>
</reference>